<dbReference type="EC" id="3.2.1.23"/>
<dbReference type="EMBL" id="L35444">
    <property type="protein sequence ID" value="AAC41485.1"/>
    <property type="molecule type" value="Genomic_DNA"/>
</dbReference>
<dbReference type="PIR" id="A57249">
    <property type="entry name" value="A57249"/>
</dbReference>
<dbReference type="SMR" id="P48982"/>
<dbReference type="CAZy" id="GH35">
    <property type="family name" value="Glycoside Hydrolase Family 35"/>
</dbReference>
<dbReference type="GO" id="GO:0004565">
    <property type="term" value="F:beta-galactosidase activity"/>
    <property type="evidence" value="ECO:0007669"/>
    <property type="project" value="UniProtKB-EC"/>
</dbReference>
<dbReference type="GO" id="GO:0005975">
    <property type="term" value="P:carbohydrate metabolic process"/>
    <property type="evidence" value="ECO:0007669"/>
    <property type="project" value="InterPro"/>
</dbReference>
<dbReference type="FunFam" id="3.20.20.80:FF:000116">
    <property type="entry name" value="Beta-galactosidase 3"/>
    <property type="match status" value="1"/>
</dbReference>
<dbReference type="Gene3D" id="2.60.120.260">
    <property type="entry name" value="Galactose-binding domain-like"/>
    <property type="match status" value="2"/>
</dbReference>
<dbReference type="Gene3D" id="3.20.20.80">
    <property type="entry name" value="Glycosidases"/>
    <property type="match status" value="1"/>
</dbReference>
<dbReference type="InterPro" id="IPR026283">
    <property type="entry name" value="B-gal_1-like"/>
</dbReference>
<dbReference type="InterPro" id="IPR048912">
    <property type="entry name" value="BetaGal1-like_ABD1"/>
</dbReference>
<dbReference type="InterPro" id="IPR048913">
    <property type="entry name" value="BetaGal_gal-bd"/>
</dbReference>
<dbReference type="InterPro" id="IPR008979">
    <property type="entry name" value="Galactose-bd-like_sf"/>
</dbReference>
<dbReference type="InterPro" id="IPR031330">
    <property type="entry name" value="Gly_Hdrlase_35_cat"/>
</dbReference>
<dbReference type="InterPro" id="IPR019801">
    <property type="entry name" value="Glyco_hydro_35_CS"/>
</dbReference>
<dbReference type="InterPro" id="IPR001944">
    <property type="entry name" value="Glycoside_Hdrlase_35"/>
</dbReference>
<dbReference type="InterPro" id="IPR017853">
    <property type="entry name" value="Glycoside_hydrolase_SF"/>
</dbReference>
<dbReference type="PANTHER" id="PTHR23421">
    <property type="entry name" value="BETA-GALACTOSIDASE RELATED"/>
    <property type="match status" value="1"/>
</dbReference>
<dbReference type="Pfam" id="PF21317">
    <property type="entry name" value="BetaGal_ABD_1"/>
    <property type="match status" value="1"/>
</dbReference>
<dbReference type="Pfam" id="PF21467">
    <property type="entry name" value="BetaGal_gal-bd"/>
    <property type="match status" value="1"/>
</dbReference>
<dbReference type="Pfam" id="PF01301">
    <property type="entry name" value="Glyco_hydro_35"/>
    <property type="match status" value="1"/>
</dbReference>
<dbReference type="PIRSF" id="PIRSF006336">
    <property type="entry name" value="B-gal"/>
    <property type="match status" value="1"/>
</dbReference>
<dbReference type="PRINTS" id="PR00742">
    <property type="entry name" value="GLHYDRLASE35"/>
</dbReference>
<dbReference type="SUPFAM" id="SSF51445">
    <property type="entry name" value="(Trans)glycosidases"/>
    <property type="match status" value="1"/>
</dbReference>
<dbReference type="SUPFAM" id="SSF49785">
    <property type="entry name" value="Galactose-binding domain-like"/>
    <property type="match status" value="2"/>
</dbReference>
<dbReference type="PROSITE" id="PS01182">
    <property type="entry name" value="GLYCOSYL_HYDROL_F35"/>
    <property type="match status" value="1"/>
</dbReference>
<protein>
    <recommendedName>
        <fullName>Beta-galactosidase</fullName>
        <shortName>Lactase</shortName>
        <ecNumber>3.2.1.23</ecNumber>
    </recommendedName>
</protein>
<evidence type="ECO:0000255" key="1"/>
<evidence type="ECO:0000269" key="2">
    <source>
    </source>
</evidence>
<evidence type="ECO:0000305" key="3"/>
<proteinExistence type="evidence at protein level"/>
<comment type="function">
    <text>Preferentially hydrolyzes beta(1-&gt;3) galactosyl linkages over beta(1-&gt;4) linkages.</text>
</comment>
<comment type="catalytic activity">
    <reaction>
        <text>Hydrolysis of terminal non-reducing beta-D-galactose residues in beta-D-galactosides.</text>
        <dbReference type="EC" id="3.2.1.23"/>
    </reaction>
</comment>
<comment type="biophysicochemical properties">
    <phDependence>
        <text evidence="2">Optimum pH is 4.5.</text>
    </phDependence>
</comment>
<comment type="similarity">
    <text evidence="3">Belongs to the glycosyl hydrolase 35 family.</text>
</comment>
<sequence>MLRTTLAPLVLALALALPAAAATPESWPTFGTQGTQFVRDGKPYQLLSGAIHFQRIPRAYWKDRLQKARALGLNTVETYVFWNLVEPQQGQFDFSGNNDVAAFVKEAAAQGLNVILRPGPYACAEWEAGGYPAWLFGKGNIRVRSRDPRFLAASQAYLDALAKQVQPLLNHNGGPIIAVQVENEYGSYADDHAYMADNRAMYVKAGFDKALLFTSDGADMLANGTLPDTLAVVNFAPGEAKSAFDKLIKFRPDQPRMVGEYWAGWFDHWGKPHAATDARQQAEEFEWILRQGHSANLYMFIGGTSFGFMNGANFQNNPSDHYAPQTTSYDYDAILDEAGHPTPKFALMRDAIARVTGVQPPALPAPITTTTLPATPLRESASLWDNLPTPIAIDTPQPMEQFGQDYGYILYRTTITGPRKGPLYLGDVRDVARVYVDQRPVGSVERRLQQVSLEVEIPAGQHTLDVLVENSGRINYGTRMADGRAGLVDPVLLDSQQLTGWQAFPLPMRTPDSIRGWTGKAVQGPAFHRGTLRIGTPTDTYLDMRAFGKGFAWANGVNLGRHWNIGPQTALYLRPSSARVTTRWWSSTWTMLHPSVRG</sequence>
<organism>
    <name type="scientific">Xanthomonas manihotis</name>
    <dbReference type="NCBI Taxonomy" id="43353"/>
    <lineage>
        <taxon>Bacteria</taxon>
        <taxon>Pseudomonadati</taxon>
        <taxon>Pseudomonadota</taxon>
        <taxon>Gammaproteobacteria</taxon>
        <taxon>Lysobacterales</taxon>
        <taxon>Lysobacteraceae</taxon>
        <taxon>Xanthomonas</taxon>
    </lineage>
</organism>
<accession>P48982</accession>
<gene>
    <name type="primary">bga</name>
</gene>
<feature type="signal peptide" evidence="2">
    <location>
        <begin position="1"/>
        <end position="21"/>
    </location>
</feature>
<feature type="chain" id="PRO_0000012198" description="Beta-galactosidase">
    <location>
        <begin position="22"/>
        <end position="598"/>
    </location>
</feature>
<feature type="active site" description="Proton donor" evidence="1">
    <location>
        <position position="184"/>
    </location>
</feature>
<feature type="active site" description="Nucleophile" evidence="1">
    <location>
        <position position="260"/>
    </location>
</feature>
<keyword id="KW-0903">Direct protein sequencing</keyword>
<keyword id="KW-0326">Glycosidase</keyword>
<keyword id="KW-0378">Hydrolase</keyword>
<keyword id="KW-0732">Signal</keyword>
<reference key="1">
    <citation type="journal article" date="1995" name="Glycobiology">
        <title>A novel beta-galactosidase gene isolated from the bacterium Xanthomonas manihotis exhibits strong homology to several eukaryotic beta-galactosidases.</title>
        <authorList>
            <person name="Taron C.H."/>
            <person name="Benner J.S."/>
            <person name="Hornstra L.J."/>
            <person name="Guthrie E.P."/>
        </authorList>
    </citation>
    <scope>NUCLEOTIDE SEQUENCE [GENOMIC DNA]</scope>
    <scope>PROTEIN SEQUENCE OF 22-38</scope>
    <scope>BIOPHYSICOCHEMICAL PROPERTIES</scope>
    <source>
        <strain>7AS1</strain>
    </source>
</reference>
<name>BGAL_XANMN</name>